<feature type="chain" id="PRO_1000086134" description="Small ribosomal subunit protein uS3">
    <location>
        <begin position="1"/>
        <end position="242"/>
    </location>
</feature>
<feature type="domain" description="KH type-2" evidence="1">
    <location>
        <begin position="39"/>
        <end position="109"/>
    </location>
</feature>
<feature type="region of interest" description="Disordered" evidence="2">
    <location>
        <begin position="220"/>
        <end position="242"/>
    </location>
</feature>
<feature type="compositionally biased region" description="Basic and acidic residues" evidence="2">
    <location>
        <begin position="233"/>
        <end position="242"/>
    </location>
</feature>
<dbReference type="EMBL" id="AP009552">
    <property type="protein sequence ID" value="BAG05559.1"/>
    <property type="molecule type" value="Genomic_DNA"/>
</dbReference>
<dbReference type="RefSeq" id="WP_002796425.1">
    <property type="nucleotide sequence ID" value="NC_010296.1"/>
</dbReference>
<dbReference type="SMR" id="B0JHZ7"/>
<dbReference type="STRING" id="449447.MAE_57370"/>
<dbReference type="PaxDb" id="449447-MAE_57370"/>
<dbReference type="EnsemblBacteria" id="BAG05559">
    <property type="protein sequence ID" value="BAG05559"/>
    <property type="gene ID" value="MAE_57370"/>
</dbReference>
<dbReference type="KEGG" id="mar:MAE_57370"/>
<dbReference type="eggNOG" id="COG0092">
    <property type="taxonomic scope" value="Bacteria"/>
</dbReference>
<dbReference type="HOGENOM" id="CLU_058591_0_2_3"/>
<dbReference type="BioCyc" id="MAER449447:MAE_RS25000-MONOMER"/>
<dbReference type="Proteomes" id="UP000001510">
    <property type="component" value="Chromosome"/>
</dbReference>
<dbReference type="GO" id="GO:0022627">
    <property type="term" value="C:cytosolic small ribosomal subunit"/>
    <property type="evidence" value="ECO:0007669"/>
    <property type="project" value="TreeGrafter"/>
</dbReference>
<dbReference type="GO" id="GO:0003729">
    <property type="term" value="F:mRNA binding"/>
    <property type="evidence" value="ECO:0007669"/>
    <property type="project" value="UniProtKB-UniRule"/>
</dbReference>
<dbReference type="GO" id="GO:0019843">
    <property type="term" value="F:rRNA binding"/>
    <property type="evidence" value="ECO:0007669"/>
    <property type="project" value="UniProtKB-UniRule"/>
</dbReference>
<dbReference type="GO" id="GO:0003735">
    <property type="term" value="F:structural constituent of ribosome"/>
    <property type="evidence" value="ECO:0007669"/>
    <property type="project" value="InterPro"/>
</dbReference>
<dbReference type="GO" id="GO:0006412">
    <property type="term" value="P:translation"/>
    <property type="evidence" value="ECO:0007669"/>
    <property type="project" value="UniProtKB-UniRule"/>
</dbReference>
<dbReference type="CDD" id="cd02412">
    <property type="entry name" value="KH-II_30S_S3"/>
    <property type="match status" value="1"/>
</dbReference>
<dbReference type="FunFam" id="3.30.300.20:FF:000001">
    <property type="entry name" value="30S ribosomal protein S3"/>
    <property type="match status" value="1"/>
</dbReference>
<dbReference type="Gene3D" id="3.30.300.20">
    <property type="match status" value="1"/>
</dbReference>
<dbReference type="Gene3D" id="3.30.1140.32">
    <property type="entry name" value="Ribosomal protein S3, C-terminal domain"/>
    <property type="match status" value="1"/>
</dbReference>
<dbReference type="HAMAP" id="MF_01309_B">
    <property type="entry name" value="Ribosomal_uS3_B"/>
    <property type="match status" value="1"/>
</dbReference>
<dbReference type="InterPro" id="IPR004087">
    <property type="entry name" value="KH_dom"/>
</dbReference>
<dbReference type="InterPro" id="IPR015946">
    <property type="entry name" value="KH_dom-like_a/b"/>
</dbReference>
<dbReference type="InterPro" id="IPR004044">
    <property type="entry name" value="KH_dom_type_2"/>
</dbReference>
<dbReference type="InterPro" id="IPR009019">
    <property type="entry name" value="KH_sf_prok-type"/>
</dbReference>
<dbReference type="InterPro" id="IPR036419">
    <property type="entry name" value="Ribosomal_S3_C_sf"/>
</dbReference>
<dbReference type="InterPro" id="IPR005704">
    <property type="entry name" value="Ribosomal_uS3_bac-typ"/>
</dbReference>
<dbReference type="InterPro" id="IPR001351">
    <property type="entry name" value="Ribosomal_uS3_C"/>
</dbReference>
<dbReference type="InterPro" id="IPR018280">
    <property type="entry name" value="Ribosomal_uS3_CS"/>
</dbReference>
<dbReference type="NCBIfam" id="TIGR01009">
    <property type="entry name" value="rpsC_bact"/>
    <property type="match status" value="1"/>
</dbReference>
<dbReference type="PANTHER" id="PTHR11760">
    <property type="entry name" value="30S/40S RIBOSOMAL PROTEIN S3"/>
    <property type="match status" value="1"/>
</dbReference>
<dbReference type="PANTHER" id="PTHR11760:SF19">
    <property type="entry name" value="SMALL RIBOSOMAL SUBUNIT PROTEIN US3C"/>
    <property type="match status" value="1"/>
</dbReference>
<dbReference type="Pfam" id="PF07650">
    <property type="entry name" value="KH_2"/>
    <property type="match status" value="1"/>
</dbReference>
<dbReference type="Pfam" id="PF00189">
    <property type="entry name" value="Ribosomal_S3_C"/>
    <property type="match status" value="1"/>
</dbReference>
<dbReference type="SMART" id="SM00322">
    <property type="entry name" value="KH"/>
    <property type="match status" value="1"/>
</dbReference>
<dbReference type="SUPFAM" id="SSF54814">
    <property type="entry name" value="Prokaryotic type KH domain (KH-domain type II)"/>
    <property type="match status" value="1"/>
</dbReference>
<dbReference type="SUPFAM" id="SSF54821">
    <property type="entry name" value="Ribosomal protein S3 C-terminal domain"/>
    <property type="match status" value="1"/>
</dbReference>
<dbReference type="PROSITE" id="PS50823">
    <property type="entry name" value="KH_TYPE_2"/>
    <property type="match status" value="1"/>
</dbReference>
<dbReference type="PROSITE" id="PS00548">
    <property type="entry name" value="RIBOSOMAL_S3"/>
    <property type="match status" value="1"/>
</dbReference>
<reference key="1">
    <citation type="journal article" date="2007" name="DNA Res.">
        <title>Complete genomic structure of the bloom-forming toxic cyanobacterium Microcystis aeruginosa NIES-843.</title>
        <authorList>
            <person name="Kaneko T."/>
            <person name="Nakajima N."/>
            <person name="Okamoto S."/>
            <person name="Suzuki I."/>
            <person name="Tanabe Y."/>
            <person name="Tamaoki M."/>
            <person name="Nakamura Y."/>
            <person name="Kasai F."/>
            <person name="Watanabe A."/>
            <person name="Kawashima K."/>
            <person name="Kishida Y."/>
            <person name="Ono A."/>
            <person name="Shimizu Y."/>
            <person name="Takahashi C."/>
            <person name="Minami C."/>
            <person name="Fujishiro T."/>
            <person name="Kohara M."/>
            <person name="Katoh M."/>
            <person name="Nakazaki N."/>
            <person name="Nakayama S."/>
            <person name="Yamada M."/>
            <person name="Tabata S."/>
            <person name="Watanabe M.M."/>
        </authorList>
    </citation>
    <scope>NUCLEOTIDE SEQUENCE [LARGE SCALE GENOMIC DNA]</scope>
    <source>
        <strain>NIES-843 / IAM M-247</strain>
    </source>
</reference>
<sequence>MGQKIHPLGFRLGVIKDHKSCWYADAKRYPELLQEDRRIRQYVEKNLANAGIADIRIERKADQVDISIHTARPGVVVGRGGTGIEQLRLGLQKALGGQRQIRINVIEVARVDADANLIAEYIAQQLERRVSFRRVVRQAIQRAQRAEVKGIKIQVSGRLNGAEIARTEWVREGRVPLHTLRADIDYSYKTASTIYGILGVKVWIFKGEIIPGQEEIAAAVPAQAPRRQQRRRQQFEDRSSEG</sequence>
<comment type="function">
    <text evidence="1">Binds the lower part of the 30S subunit head. Binds mRNA in the 70S ribosome, positioning it for translation.</text>
</comment>
<comment type="subunit">
    <text evidence="1">Part of the 30S ribosomal subunit. Forms a tight complex with proteins S10 and S14.</text>
</comment>
<comment type="similarity">
    <text evidence="1">Belongs to the universal ribosomal protein uS3 family.</text>
</comment>
<name>RS3_MICAN</name>
<organism>
    <name type="scientific">Microcystis aeruginosa (strain NIES-843 / IAM M-2473)</name>
    <dbReference type="NCBI Taxonomy" id="449447"/>
    <lineage>
        <taxon>Bacteria</taxon>
        <taxon>Bacillati</taxon>
        <taxon>Cyanobacteriota</taxon>
        <taxon>Cyanophyceae</taxon>
        <taxon>Oscillatoriophycideae</taxon>
        <taxon>Chroococcales</taxon>
        <taxon>Microcystaceae</taxon>
        <taxon>Microcystis</taxon>
    </lineage>
</organism>
<keyword id="KW-0687">Ribonucleoprotein</keyword>
<keyword id="KW-0689">Ribosomal protein</keyword>
<keyword id="KW-0694">RNA-binding</keyword>
<keyword id="KW-0699">rRNA-binding</keyword>
<proteinExistence type="inferred from homology"/>
<gene>
    <name evidence="1" type="primary">rpsC</name>
    <name evidence="1" type="synonym">rps3</name>
    <name type="ordered locus">MAE_57370</name>
</gene>
<protein>
    <recommendedName>
        <fullName evidence="1">Small ribosomal subunit protein uS3</fullName>
    </recommendedName>
    <alternativeName>
        <fullName evidence="3">30S ribosomal protein S3</fullName>
    </alternativeName>
</protein>
<accession>B0JHZ7</accession>
<evidence type="ECO:0000255" key="1">
    <source>
        <dbReference type="HAMAP-Rule" id="MF_01309"/>
    </source>
</evidence>
<evidence type="ECO:0000256" key="2">
    <source>
        <dbReference type="SAM" id="MobiDB-lite"/>
    </source>
</evidence>
<evidence type="ECO:0000305" key="3"/>